<accession>B2SQR1</accession>
<protein>
    <recommendedName>
        <fullName evidence="1">Large ribosomal subunit protein uL4</fullName>
    </recommendedName>
    <alternativeName>
        <fullName evidence="3">50S ribosomal protein L4</fullName>
    </alternativeName>
</protein>
<keyword id="KW-0687">Ribonucleoprotein</keyword>
<keyword id="KW-0689">Ribosomal protein</keyword>
<keyword id="KW-0694">RNA-binding</keyword>
<keyword id="KW-0699">rRNA-binding</keyword>
<name>RL4_XANOP</name>
<reference key="1">
    <citation type="journal article" date="2008" name="BMC Genomics">
        <title>Genome sequence and rapid evolution of the rice pathogen Xanthomonas oryzae pv. oryzae PXO99A.</title>
        <authorList>
            <person name="Salzberg S.L."/>
            <person name="Sommer D.D."/>
            <person name="Schatz M.C."/>
            <person name="Phillippy A.M."/>
            <person name="Rabinowicz P.D."/>
            <person name="Tsuge S."/>
            <person name="Furutani A."/>
            <person name="Ochiai H."/>
            <person name="Delcher A.L."/>
            <person name="Kelley D."/>
            <person name="Madupu R."/>
            <person name="Puiu D."/>
            <person name="Radune D."/>
            <person name="Shumway M."/>
            <person name="Trapnell C."/>
            <person name="Aparna G."/>
            <person name="Jha G."/>
            <person name="Pandey A."/>
            <person name="Patil P.B."/>
            <person name="Ishihara H."/>
            <person name="Meyer D.F."/>
            <person name="Szurek B."/>
            <person name="Verdier V."/>
            <person name="Koebnik R."/>
            <person name="Dow J.M."/>
            <person name="Ryan R.P."/>
            <person name="Hirata H."/>
            <person name="Tsuyumu S."/>
            <person name="Won Lee S."/>
            <person name="Seo Y.-S."/>
            <person name="Sriariyanum M."/>
            <person name="Ronald P.C."/>
            <person name="Sonti R.V."/>
            <person name="Van Sluys M.-A."/>
            <person name="Leach J.E."/>
            <person name="White F.F."/>
            <person name="Bogdanove A.J."/>
        </authorList>
    </citation>
    <scope>NUCLEOTIDE SEQUENCE [LARGE SCALE GENOMIC DNA]</scope>
    <source>
        <strain>PXO99A</strain>
    </source>
</reference>
<feature type="chain" id="PRO_1000142207" description="Large ribosomal subunit protein uL4">
    <location>
        <begin position="1"/>
        <end position="201"/>
    </location>
</feature>
<feature type="region of interest" description="Disordered" evidence="2">
    <location>
        <begin position="44"/>
        <end position="68"/>
    </location>
</feature>
<proteinExistence type="inferred from homology"/>
<sequence>MELVITGSNNKVSVSEAVFGREFSEDLVHQVVVAYRNAGRAGTKAQKTRSEVAGTTKKSKKQKGGGARHGALTAPIFVGGGVTFAAKPRSFEQKVNRKMYRAAICAIFSELNRQGRLMIVDAFDLEATKTKDLIEKLKGLDVGKRPLIVTEEASEHLYLSARNLPYVQVRDVQGLDPVALVGADTVVITADAVKKVEEWLA</sequence>
<organism>
    <name type="scientific">Xanthomonas oryzae pv. oryzae (strain PXO99A)</name>
    <dbReference type="NCBI Taxonomy" id="360094"/>
    <lineage>
        <taxon>Bacteria</taxon>
        <taxon>Pseudomonadati</taxon>
        <taxon>Pseudomonadota</taxon>
        <taxon>Gammaproteobacteria</taxon>
        <taxon>Lysobacterales</taxon>
        <taxon>Lysobacteraceae</taxon>
        <taxon>Xanthomonas</taxon>
    </lineage>
</organism>
<gene>
    <name evidence="1" type="primary">rplD</name>
    <name type="ordered locus">PXO_04520</name>
</gene>
<dbReference type="EMBL" id="CP000967">
    <property type="protein sequence ID" value="ACD57888.1"/>
    <property type="molecule type" value="Genomic_DNA"/>
</dbReference>
<dbReference type="RefSeq" id="WP_011260028.1">
    <property type="nucleotide sequence ID" value="NC_010717.2"/>
</dbReference>
<dbReference type="SMR" id="B2SQR1"/>
<dbReference type="GeneID" id="77338712"/>
<dbReference type="KEGG" id="xop:PXO_04520"/>
<dbReference type="eggNOG" id="COG0088">
    <property type="taxonomic scope" value="Bacteria"/>
</dbReference>
<dbReference type="HOGENOM" id="CLU_041575_5_2_6"/>
<dbReference type="Proteomes" id="UP000001740">
    <property type="component" value="Chromosome"/>
</dbReference>
<dbReference type="GO" id="GO:1990904">
    <property type="term" value="C:ribonucleoprotein complex"/>
    <property type="evidence" value="ECO:0007669"/>
    <property type="project" value="UniProtKB-KW"/>
</dbReference>
<dbReference type="GO" id="GO:0005840">
    <property type="term" value="C:ribosome"/>
    <property type="evidence" value="ECO:0007669"/>
    <property type="project" value="UniProtKB-KW"/>
</dbReference>
<dbReference type="GO" id="GO:0019843">
    <property type="term" value="F:rRNA binding"/>
    <property type="evidence" value="ECO:0007669"/>
    <property type="project" value="UniProtKB-UniRule"/>
</dbReference>
<dbReference type="GO" id="GO:0003735">
    <property type="term" value="F:structural constituent of ribosome"/>
    <property type="evidence" value="ECO:0007669"/>
    <property type="project" value="InterPro"/>
</dbReference>
<dbReference type="GO" id="GO:0006412">
    <property type="term" value="P:translation"/>
    <property type="evidence" value="ECO:0007669"/>
    <property type="project" value="UniProtKB-UniRule"/>
</dbReference>
<dbReference type="FunFam" id="3.40.1370.10:FF:000007">
    <property type="entry name" value="50S ribosomal protein L4"/>
    <property type="match status" value="1"/>
</dbReference>
<dbReference type="Gene3D" id="3.40.1370.10">
    <property type="match status" value="1"/>
</dbReference>
<dbReference type="HAMAP" id="MF_01328_B">
    <property type="entry name" value="Ribosomal_uL4_B"/>
    <property type="match status" value="1"/>
</dbReference>
<dbReference type="InterPro" id="IPR002136">
    <property type="entry name" value="Ribosomal_uL4"/>
</dbReference>
<dbReference type="InterPro" id="IPR013005">
    <property type="entry name" value="Ribosomal_uL4-like"/>
</dbReference>
<dbReference type="InterPro" id="IPR023574">
    <property type="entry name" value="Ribosomal_uL4_dom_sf"/>
</dbReference>
<dbReference type="NCBIfam" id="TIGR03953">
    <property type="entry name" value="rplD_bact"/>
    <property type="match status" value="1"/>
</dbReference>
<dbReference type="PANTHER" id="PTHR10746">
    <property type="entry name" value="50S RIBOSOMAL PROTEIN L4"/>
    <property type="match status" value="1"/>
</dbReference>
<dbReference type="PANTHER" id="PTHR10746:SF6">
    <property type="entry name" value="LARGE RIBOSOMAL SUBUNIT PROTEIN UL4M"/>
    <property type="match status" value="1"/>
</dbReference>
<dbReference type="Pfam" id="PF00573">
    <property type="entry name" value="Ribosomal_L4"/>
    <property type="match status" value="1"/>
</dbReference>
<dbReference type="SUPFAM" id="SSF52166">
    <property type="entry name" value="Ribosomal protein L4"/>
    <property type="match status" value="1"/>
</dbReference>
<evidence type="ECO:0000255" key="1">
    <source>
        <dbReference type="HAMAP-Rule" id="MF_01328"/>
    </source>
</evidence>
<evidence type="ECO:0000256" key="2">
    <source>
        <dbReference type="SAM" id="MobiDB-lite"/>
    </source>
</evidence>
<evidence type="ECO:0000305" key="3"/>
<comment type="function">
    <text evidence="1">One of the primary rRNA binding proteins, this protein initially binds near the 5'-end of the 23S rRNA. It is important during the early stages of 50S assembly. It makes multiple contacts with different domains of the 23S rRNA in the assembled 50S subunit and ribosome.</text>
</comment>
<comment type="function">
    <text evidence="1">Forms part of the polypeptide exit tunnel.</text>
</comment>
<comment type="subunit">
    <text evidence="1">Part of the 50S ribosomal subunit.</text>
</comment>
<comment type="similarity">
    <text evidence="1">Belongs to the universal ribosomal protein uL4 family.</text>
</comment>